<feature type="chain" id="PRO_0000178326" description="Small ribosomal subunit protein bS21">
    <location>
        <begin position="1"/>
        <end position="58"/>
    </location>
</feature>
<feature type="region of interest" description="Disordered" evidence="1">
    <location>
        <begin position="37"/>
        <end position="58"/>
    </location>
</feature>
<feature type="compositionally biased region" description="Basic residues" evidence="1">
    <location>
        <begin position="43"/>
        <end position="58"/>
    </location>
</feature>
<gene>
    <name type="primary">rpsU</name>
    <name type="synonym">rs21</name>
    <name type="ordered locus">TC_0620</name>
</gene>
<sequence>MPSVKVRVGEPIDRALRILKKKIDKEGILKTSKSHRFYDKPSVKKRAKSKAAAKYRGR</sequence>
<name>RS21_CHLMU</name>
<protein>
    <recommendedName>
        <fullName evidence="2">Small ribosomal subunit protein bS21</fullName>
    </recommendedName>
    <alternativeName>
        <fullName>30S ribosomal protein S21</fullName>
    </alternativeName>
</protein>
<accession>P66517</accession>
<accession>O84346</accession>
<evidence type="ECO:0000256" key="1">
    <source>
        <dbReference type="SAM" id="MobiDB-lite"/>
    </source>
</evidence>
<evidence type="ECO:0000305" key="2"/>
<comment type="similarity">
    <text evidence="2">Belongs to the bacterial ribosomal protein bS21 family.</text>
</comment>
<keyword id="KW-0687">Ribonucleoprotein</keyword>
<keyword id="KW-0689">Ribosomal protein</keyword>
<proteinExistence type="inferred from homology"/>
<reference key="1">
    <citation type="journal article" date="2000" name="Nucleic Acids Res.">
        <title>Genome sequences of Chlamydia trachomatis MoPn and Chlamydia pneumoniae AR39.</title>
        <authorList>
            <person name="Read T.D."/>
            <person name="Brunham R.C."/>
            <person name="Shen C."/>
            <person name="Gill S.R."/>
            <person name="Heidelberg J.F."/>
            <person name="White O."/>
            <person name="Hickey E.K."/>
            <person name="Peterson J.D."/>
            <person name="Utterback T.R."/>
            <person name="Berry K.J."/>
            <person name="Bass S."/>
            <person name="Linher K.D."/>
            <person name="Weidman J.F."/>
            <person name="Khouri H.M."/>
            <person name="Craven B."/>
            <person name="Bowman C."/>
            <person name="Dodson R.J."/>
            <person name="Gwinn M.L."/>
            <person name="Nelson W.C."/>
            <person name="DeBoy R.T."/>
            <person name="Kolonay J.F."/>
            <person name="McClarty G."/>
            <person name="Salzberg S.L."/>
            <person name="Eisen J.A."/>
            <person name="Fraser C.M."/>
        </authorList>
    </citation>
    <scope>NUCLEOTIDE SEQUENCE [LARGE SCALE GENOMIC DNA]</scope>
    <source>
        <strain>MoPn / Nigg</strain>
    </source>
</reference>
<dbReference type="EMBL" id="AE002160">
    <property type="protein sequence ID" value="AAF39451.1"/>
    <property type="molecule type" value="Genomic_DNA"/>
</dbReference>
<dbReference type="PIR" id="E81683">
    <property type="entry name" value="E81683"/>
</dbReference>
<dbReference type="RefSeq" id="WP_009871693.1">
    <property type="nucleotide sequence ID" value="NZ_CP063055.1"/>
</dbReference>
<dbReference type="SMR" id="P66517"/>
<dbReference type="GeneID" id="1245980"/>
<dbReference type="KEGG" id="cmu:TC_0620"/>
<dbReference type="eggNOG" id="COG0828">
    <property type="taxonomic scope" value="Bacteria"/>
</dbReference>
<dbReference type="HOGENOM" id="CLU_159258_2_3_0"/>
<dbReference type="OrthoDB" id="9799244at2"/>
<dbReference type="Proteomes" id="UP000000800">
    <property type="component" value="Chromosome"/>
</dbReference>
<dbReference type="GO" id="GO:1990904">
    <property type="term" value="C:ribonucleoprotein complex"/>
    <property type="evidence" value="ECO:0007669"/>
    <property type="project" value="UniProtKB-KW"/>
</dbReference>
<dbReference type="GO" id="GO:0005840">
    <property type="term" value="C:ribosome"/>
    <property type="evidence" value="ECO:0007669"/>
    <property type="project" value="UniProtKB-KW"/>
</dbReference>
<dbReference type="GO" id="GO:0003735">
    <property type="term" value="F:structural constituent of ribosome"/>
    <property type="evidence" value="ECO:0007669"/>
    <property type="project" value="InterPro"/>
</dbReference>
<dbReference type="GO" id="GO:0006412">
    <property type="term" value="P:translation"/>
    <property type="evidence" value="ECO:0007669"/>
    <property type="project" value="UniProtKB-UniRule"/>
</dbReference>
<dbReference type="Gene3D" id="1.20.5.1150">
    <property type="entry name" value="Ribosomal protein S8"/>
    <property type="match status" value="1"/>
</dbReference>
<dbReference type="HAMAP" id="MF_00358">
    <property type="entry name" value="Ribosomal_bS21"/>
    <property type="match status" value="1"/>
</dbReference>
<dbReference type="InterPro" id="IPR001911">
    <property type="entry name" value="Ribosomal_bS21"/>
</dbReference>
<dbReference type="InterPro" id="IPR038380">
    <property type="entry name" value="Ribosomal_bS21_sf"/>
</dbReference>
<dbReference type="NCBIfam" id="TIGR00030">
    <property type="entry name" value="S21p"/>
    <property type="match status" value="1"/>
</dbReference>
<dbReference type="Pfam" id="PF01165">
    <property type="entry name" value="Ribosomal_S21"/>
    <property type="match status" value="1"/>
</dbReference>
<dbReference type="PRINTS" id="PR00976">
    <property type="entry name" value="RIBOSOMALS21"/>
</dbReference>
<organism>
    <name type="scientific">Chlamydia muridarum (strain MoPn / Nigg)</name>
    <dbReference type="NCBI Taxonomy" id="243161"/>
    <lineage>
        <taxon>Bacteria</taxon>
        <taxon>Pseudomonadati</taxon>
        <taxon>Chlamydiota</taxon>
        <taxon>Chlamydiia</taxon>
        <taxon>Chlamydiales</taxon>
        <taxon>Chlamydiaceae</taxon>
        <taxon>Chlamydia/Chlamydophila group</taxon>
        <taxon>Chlamydia</taxon>
    </lineage>
</organism>